<accession>O50316</accession>
<accession>B3QMJ6</accession>
<organism>
    <name type="scientific">Chlorobaculum parvum (strain DSM 263 / NCIMB 8327)</name>
    <name type="common">Chlorobium vibrioforme subsp. thiosulfatophilum</name>
    <dbReference type="NCBI Taxonomy" id="517417"/>
    <lineage>
        <taxon>Bacteria</taxon>
        <taxon>Pseudomonadati</taxon>
        <taxon>Chlorobiota</taxon>
        <taxon>Chlorobiia</taxon>
        <taxon>Chlorobiales</taxon>
        <taxon>Chlorobiaceae</taxon>
        <taxon>Chlorobaculum</taxon>
    </lineage>
</organism>
<keyword id="KW-0129">CBS domain</keyword>
<keyword id="KW-0332">GMP biosynthesis</keyword>
<keyword id="KW-0479">Metal-binding</keyword>
<keyword id="KW-0520">NAD</keyword>
<keyword id="KW-0560">Oxidoreductase</keyword>
<keyword id="KW-0630">Potassium</keyword>
<keyword id="KW-0658">Purine biosynthesis</keyword>
<keyword id="KW-0677">Repeat</keyword>
<proteinExistence type="inferred from homology"/>
<evidence type="ECO:0000255" key="1">
    <source>
        <dbReference type="HAMAP-Rule" id="MF_01964"/>
    </source>
</evidence>
<evidence type="ECO:0000305" key="2"/>
<comment type="function">
    <text evidence="1">Catalyzes the conversion of inosine 5'-phosphate (IMP) to xanthosine 5'-phosphate (XMP), the first committed and rate-limiting step in the de novo synthesis of guanine nucleotides, and therefore plays an important role in the regulation of cell growth.</text>
</comment>
<comment type="catalytic activity">
    <reaction evidence="1">
        <text>IMP + NAD(+) + H2O = XMP + NADH + H(+)</text>
        <dbReference type="Rhea" id="RHEA:11708"/>
        <dbReference type="ChEBI" id="CHEBI:15377"/>
        <dbReference type="ChEBI" id="CHEBI:15378"/>
        <dbReference type="ChEBI" id="CHEBI:57464"/>
        <dbReference type="ChEBI" id="CHEBI:57540"/>
        <dbReference type="ChEBI" id="CHEBI:57945"/>
        <dbReference type="ChEBI" id="CHEBI:58053"/>
        <dbReference type="EC" id="1.1.1.205"/>
    </reaction>
</comment>
<comment type="cofactor">
    <cofactor evidence="1">
        <name>K(+)</name>
        <dbReference type="ChEBI" id="CHEBI:29103"/>
    </cofactor>
</comment>
<comment type="activity regulation">
    <text evidence="1">Mycophenolic acid (MPA) is a non-competitive inhibitor that prevents formation of the closed enzyme conformation by binding to the same site as the amobile flap. In contrast, mizoribine monophosphate (MZP) is a competitive inhibitor that induces the closed conformation. MPA is a potent inhibitor of mammalian IMPDHs but a poor inhibitor of the bacterial enzymes. MZP is a more potent inhibitor of bacterial IMPDH.</text>
</comment>
<comment type="pathway">
    <text evidence="1">Purine metabolism; XMP biosynthesis via de novo pathway; XMP from IMP: step 1/1.</text>
</comment>
<comment type="subunit">
    <text evidence="1">Homotetramer.</text>
</comment>
<comment type="similarity">
    <text evidence="1">Belongs to the IMPDH/GMPR family.</text>
</comment>
<comment type="sequence caution" evidence="2">
    <conflict type="erroneous initiation">
        <sequence resource="EMBL-CDS" id="CAB06303"/>
    </conflict>
</comment>
<protein>
    <recommendedName>
        <fullName evidence="1">Inosine-5'-monophosphate dehydrogenase</fullName>
        <shortName evidence="1">IMP dehydrogenase</shortName>
        <shortName evidence="1">IMPD</shortName>
        <shortName evidence="1">IMPDH</shortName>
        <ecNumber evidence="1">1.1.1.205</ecNumber>
    </recommendedName>
</protein>
<sequence length="494" mass="53202">MDKILYDALTFDDVLLVPAYSNVLPKETVVKSRVTRNIEVNLPLVSAAMDTVTEAELAIALARAGGIGIIHKNLSIDVQARHVAKVKRFESGIIRNPITLFEDATIQEAIDLMLRHSISGIPVVERPTPEGCLLLKGIVTNRDLRMTTSSNEKITTIMTTDLITAQEDIDLLAAEEILMQNKIEKLLVIDEEGYLKGLITFKDIQKRKQCPDACKDMHGRLRVGAAVGIRSNTITRVDALVEAGVDVVAVDTAHGHSQAVLDMVATIKEKYPELEVIAGNVATPEAVRDLVKAGADAVKVGIGPGSICTTRVVAGVGMPQLTAIMNCAKEAAKTDTPIIADGGIKYSGDISKALAAGADTVMMGSIFAGTDESPGETILYEGRRFKAYRGMGSLGAMSEPEGSSDRYFQDASAETKKYVPEGIEGRIPAKGPLDEVVYQLIGGLKSSMGYCGVKNIEELKKNTRFVRITSAGLRESHPHDVMITREAPNYSTSH</sequence>
<dbReference type="EC" id="1.1.1.205" evidence="1"/>
<dbReference type="EMBL" id="Z83933">
    <property type="protein sequence ID" value="CAB06303.1"/>
    <property type="status" value="ALT_INIT"/>
    <property type="molecule type" value="Genomic_DNA"/>
</dbReference>
<dbReference type="EMBL" id="CP001099">
    <property type="protein sequence ID" value="ACF11149.1"/>
    <property type="molecule type" value="Genomic_DNA"/>
</dbReference>
<dbReference type="PIR" id="T17196">
    <property type="entry name" value="T17196"/>
</dbReference>
<dbReference type="RefSeq" id="WP_012501982.1">
    <property type="nucleotide sequence ID" value="NC_011027.1"/>
</dbReference>
<dbReference type="SMR" id="O50316"/>
<dbReference type="STRING" id="517417.Cpar_0730"/>
<dbReference type="KEGG" id="cpc:Cpar_0730"/>
<dbReference type="eggNOG" id="COG0516">
    <property type="taxonomic scope" value="Bacteria"/>
</dbReference>
<dbReference type="HOGENOM" id="CLU_022552_2_2_10"/>
<dbReference type="OrthoDB" id="9805398at2"/>
<dbReference type="UniPathway" id="UPA00601">
    <property type="reaction ID" value="UER00295"/>
</dbReference>
<dbReference type="Proteomes" id="UP000008811">
    <property type="component" value="Chromosome"/>
</dbReference>
<dbReference type="GO" id="GO:0003938">
    <property type="term" value="F:IMP dehydrogenase activity"/>
    <property type="evidence" value="ECO:0007669"/>
    <property type="project" value="UniProtKB-UniRule"/>
</dbReference>
<dbReference type="GO" id="GO:0046872">
    <property type="term" value="F:metal ion binding"/>
    <property type="evidence" value="ECO:0007669"/>
    <property type="project" value="UniProtKB-UniRule"/>
</dbReference>
<dbReference type="GO" id="GO:0000166">
    <property type="term" value="F:nucleotide binding"/>
    <property type="evidence" value="ECO:0007669"/>
    <property type="project" value="UniProtKB-UniRule"/>
</dbReference>
<dbReference type="GO" id="GO:0006177">
    <property type="term" value="P:GMP biosynthetic process"/>
    <property type="evidence" value="ECO:0007669"/>
    <property type="project" value="UniProtKB-UniRule"/>
</dbReference>
<dbReference type="GO" id="GO:0006183">
    <property type="term" value="P:GTP biosynthetic process"/>
    <property type="evidence" value="ECO:0007669"/>
    <property type="project" value="TreeGrafter"/>
</dbReference>
<dbReference type="CDD" id="cd04601">
    <property type="entry name" value="CBS_pair_IMPDH"/>
    <property type="match status" value="1"/>
</dbReference>
<dbReference type="CDD" id="cd00381">
    <property type="entry name" value="IMPDH"/>
    <property type="match status" value="1"/>
</dbReference>
<dbReference type="FunFam" id="3.20.20.70:FF:000003">
    <property type="entry name" value="GMP reductase"/>
    <property type="match status" value="1"/>
</dbReference>
<dbReference type="Gene3D" id="3.20.20.70">
    <property type="entry name" value="Aldolase class I"/>
    <property type="match status" value="1"/>
</dbReference>
<dbReference type="HAMAP" id="MF_01964">
    <property type="entry name" value="IMPDH"/>
    <property type="match status" value="1"/>
</dbReference>
<dbReference type="InterPro" id="IPR013785">
    <property type="entry name" value="Aldolase_TIM"/>
</dbReference>
<dbReference type="InterPro" id="IPR000644">
    <property type="entry name" value="CBS_dom"/>
</dbReference>
<dbReference type="InterPro" id="IPR005990">
    <property type="entry name" value="IMP_DH"/>
</dbReference>
<dbReference type="InterPro" id="IPR015875">
    <property type="entry name" value="IMP_DH/GMP_Rdtase_CS"/>
</dbReference>
<dbReference type="InterPro" id="IPR001093">
    <property type="entry name" value="IMP_DH_GMPRt"/>
</dbReference>
<dbReference type="NCBIfam" id="TIGR01302">
    <property type="entry name" value="IMP_dehydrog"/>
    <property type="match status" value="1"/>
</dbReference>
<dbReference type="PANTHER" id="PTHR11911:SF111">
    <property type="entry name" value="INOSINE-5'-MONOPHOSPHATE DEHYDROGENASE"/>
    <property type="match status" value="1"/>
</dbReference>
<dbReference type="PANTHER" id="PTHR11911">
    <property type="entry name" value="INOSINE-5-MONOPHOSPHATE DEHYDROGENASE RELATED"/>
    <property type="match status" value="1"/>
</dbReference>
<dbReference type="Pfam" id="PF00571">
    <property type="entry name" value="CBS"/>
    <property type="match status" value="2"/>
</dbReference>
<dbReference type="Pfam" id="PF00478">
    <property type="entry name" value="IMPDH"/>
    <property type="match status" value="1"/>
</dbReference>
<dbReference type="PIRSF" id="PIRSF000130">
    <property type="entry name" value="IMPDH"/>
    <property type="match status" value="1"/>
</dbReference>
<dbReference type="SMART" id="SM00116">
    <property type="entry name" value="CBS"/>
    <property type="match status" value="2"/>
</dbReference>
<dbReference type="SMART" id="SM01240">
    <property type="entry name" value="IMPDH"/>
    <property type="match status" value="1"/>
</dbReference>
<dbReference type="SUPFAM" id="SSF51412">
    <property type="entry name" value="Inosine monophosphate dehydrogenase (IMPDH)"/>
    <property type="match status" value="2"/>
</dbReference>
<dbReference type="PROSITE" id="PS51371">
    <property type="entry name" value="CBS"/>
    <property type="match status" value="2"/>
</dbReference>
<dbReference type="PROSITE" id="PS00487">
    <property type="entry name" value="IMP_DH_GMP_RED"/>
    <property type="match status" value="1"/>
</dbReference>
<name>IMDH_CHLP8</name>
<reference key="1">
    <citation type="journal article" date="1996" name="Hereditas">
        <title>Clustering of genes with function in the biosynthesis of bacteriochlorophyll and heme in the green sulfur bacterium Chlorobium vibrioforme.</title>
        <authorList>
            <person name="Petersen B.L."/>
            <person name="Moeller M.G."/>
            <person name="Stummann B.M."/>
            <person name="Henningsen K.W."/>
        </authorList>
    </citation>
    <scope>NUCLEOTIDE SEQUENCE [GENOMIC DNA]</scope>
</reference>
<reference key="2">
    <citation type="submission" date="2008-06" db="EMBL/GenBank/DDBJ databases">
        <title>Complete sequence of Chlorobaculum parvum NCIB 8327.</title>
        <authorList>
            <consortium name="US DOE Joint Genome Institute"/>
            <person name="Lucas S."/>
            <person name="Copeland A."/>
            <person name="Lapidus A."/>
            <person name="Glavina del Rio T."/>
            <person name="Dalin E."/>
            <person name="Tice H."/>
            <person name="Bruce D."/>
            <person name="Goodwin L."/>
            <person name="Pitluck S."/>
            <person name="Schmutz J."/>
            <person name="Larimer F."/>
            <person name="Land M."/>
            <person name="Hauser L."/>
            <person name="Kyrpides N."/>
            <person name="Mikhailova N."/>
            <person name="Zhao F."/>
            <person name="Li T."/>
            <person name="Liu Z."/>
            <person name="Overmann J."/>
            <person name="Bryant D.A."/>
            <person name="Richardson P."/>
        </authorList>
    </citation>
    <scope>NUCLEOTIDE SEQUENCE [LARGE SCALE GENOMIC DNA]</scope>
    <source>
        <strain>DSM 263 / NCIMB 8327</strain>
    </source>
</reference>
<gene>
    <name evidence="1" type="primary">guaB</name>
    <name type="ordered locus">Cpar_0730</name>
</gene>
<feature type="chain" id="PRO_0000093694" description="Inosine-5'-monophosphate dehydrogenase">
    <location>
        <begin position="1"/>
        <end position="494"/>
    </location>
</feature>
<feature type="domain" description="CBS 1" evidence="1">
    <location>
        <begin position="93"/>
        <end position="154"/>
    </location>
</feature>
<feature type="domain" description="CBS 2" evidence="1">
    <location>
        <begin position="158"/>
        <end position="217"/>
    </location>
</feature>
<feature type="active site" description="Thioimidate intermediate" evidence="1">
    <location>
        <position position="308"/>
    </location>
</feature>
<feature type="active site" description="Proton acceptor" evidence="1">
    <location>
        <position position="406"/>
    </location>
</feature>
<feature type="binding site" evidence="1">
    <location>
        <position position="251"/>
    </location>
    <ligand>
        <name>NAD(+)</name>
        <dbReference type="ChEBI" id="CHEBI:57540"/>
    </ligand>
</feature>
<feature type="binding site" evidence="1">
    <location>
        <begin position="301"/>
        <end position="303"/>
    </location>
    <ligand>
        <name>NAD(+)</name>
        <dbReference type="ChEBI" id="CHEBI:57540"/>
    </ligand>
</feature>
<feature type="binding site" description="in other chain" evidence="1">
    <location>
        <position position="303"/>
    </location>
    <ligand>
        <name>K(+)</name>
        <dbReference type="ChEBI" id="CHEBI:29103"/>
        <note>ligand shared between two tetrameric partners</note>
    </ligand>
</feature>
<feature type="binding site" description="in other chain" evidence="1">
    <location>
        <position position="305"/>
    </location>
    <ligand>
        <name>K(+)</name>
        <dbReference type="ChEBI" id="CHEBI:29103"/>
        <note>ligand shared between two tetrameric partners</note>
    </ligand>
</feature>
<feature type="binding site" evidence="1">
    <location>
        <position position="306"/>
    </location>
    <ligand>
        <name>IMP</name>
        <dbReference type="ChEBI" id="CHEBI:58053"/>
    </ligand>
</feature>
<feature type="binding site" description="in other chain" evidence="1">
    <location>
        <position position="308"/>
    </location>
    <ligand>
        <name>K(+)</name>
        <dbReference type="ChEBI" id="CHEBI:29103"/>
        <note>ligand shared between two tetrameric partners</note>
    </ligand>
</feature>
<feature type="binding site" evidence="1">
    <location>
        <begin position="341"/>
        <end position="343"/>
    </location>
    <ligand>
        <name>IMP</name>
        <dbReference type="ChEBI" id="CHEBI:58053"/>
    </ligand>
</feature>
<feature type="binding site" evidence="1">
    <location>
        <begin position="364"/>
        <end position="365"/>
    </location>
    <ligand>
        <name>IMP</name>
        <dbReference type="ChEBI" id="CHEBI:58053"/>
    </ligand>
</feature>
<feature type="binding site" evidence="1">
    <location>
        <begin position="388"/>
        <end position="392"/>
    </location>
    <ligand>
        <name>IMP</name>
        <dbReference type="ChEBI" id="CHEBI:58053"/>
    </ligand>
</feature>
<feature type="binding site" evidence="1">
    <location>
        <position position="421"/>
    </location>
    <ligand>
        <name>IMP</name>
        <dbReference type="ChEBI" id="CHEBI:58053"/>
    </ligand>
</feature>
<feature type="binding site" evidence="1">
    <location>
        <position position="475"/>
    </location>
    <ligand>
        <name>K(+)</name>
        <dbReference type="ChEBI" id="CHEBI:29103"/>
        <note>ligand shared between two tetrameric partners</note>
    </ligand>
</feature>
<feature type="binding site" evidence="1">
    <location>
        <position position="476"/>
    </location>
    <ligand>
        <name>K(+)</name>
        <dbReference type="ChEBI" id="CHEBI:29103"/>
        <note>ligand shared between two tetrameric partners</note>
    </ligand>
</feature>
<feature type="binding site" evidence="1">
    <location>
        <position position="477"/>
    </location>
    <ligand>
        <name>K(+)</name>
        <dbReference type="ChEBI" id="CHEBI:29103"/>
        <note>ligand shared between two tetrameric partners</note>
    </ligand>
</feature>
<feature type="sequence conflict" description="In Ref. 1; CAB06303." evidence="2" ref="1">
    <original>M</original>
    <variation>I</variation>
    <location>
        <position position="158"/>
    </location>
</feature>
<feature type="sequence conflict" description="In Ref. 1; CAB06303." evidence="2" ref="1">
    <original>AKG</original>
    <variation>QR</variation>
    <location>
        <begin position="429"/>
        <end position="431"/>
    </location>
</feature>